<comment type="caution">
    <text evidence="1">Product of a dubious CDS prediction.</text>
</comment>
<accession>Q9BXW3</accession>
<evidence type="ECO:0000305" key="1"/>
<dbReference type="EMBL" id="AY277594">
    <property type="protein sequence ID" value="AAQ18033.1"/>
    <property type="molecule type" value="mRNA"/>
</dbReference>
<dbReference type="EMBL" id="AF277181">
    <property type="protein sequence ID" value="AAK07540.1"/>
    <property type="molecule type" value="mRNA"/>
</dbReference>
<dbReference type="EMBL" id="AL513497">
    <property type="status" value="NOT_ANNOTATED_CDS"/>
    <property type="molecule type" value="Genomic_DNA"/>
</dbReference>
<dbReference type="BioMuta" id="HGNC:30062"/>
<dbReference type="AGR" id="HGNC:30062"/>
<dbReference type="GeneCards" id="SNHG12"/>
<dbReference type="HGNC" id="HGNC:30062">
    <property type="gene designation" value="SNHG12"/>
</dbReference>
<dbReference type="neXtProt" id="NX_Q9BXW3"/>
<dbReference type="InParanoid" id="Q9BXW3"/>
<dbReference type="PAN-GO" id="Q9BXW3">
    <property type="GO annotations" value="0 GO annotations based on evolutionary models"/>
</dbReference>
<dbReference type="ChiTaRS" id="SNHG12">
    <property type="organism name" value="human"/>
</dbReference>
<dbReference type="Pharos" id="Q9BXW3">
    <property type="development level" value="Tdark"/>
</dbReference>
<dbReference type="Proteomes" id="UP000005640">
    <property type="component" value="Unplaced"/>
</dbReference>
<dbReference type="RNAct" id="Q9BXW3">
    <property type="molecule type" value="protein"/>
</dbReference>
<organism>
    <name type="scientific">Homo sapiens</name>
    <name type="common">Human</name>
    <dbReference type="NCBI Taxonomy" id="9606"/>
    <lineage>
        <taxon>Eukaryota</taxon>
        <taxon>Metazoa</taxon>
        <taxon>Chordata</taxon>
        <taxon>Craniata</taxon>
        <taxon>Vertebrata</taxon>
        <taxon>Euteleostomi</taxon>
        <taxon>Mammalia</taxon>
        <taxon>Eutheria</taxon>
        <taxon>Euarchontoglires</taxon>
        <taxon>Primates</taxon>
        <taxon>Haplorrhini</taxon>
        <taxon>Catarrhini</taxon>
        <taxon>Hominidae</taxon>
        <taxon>Homo</taxon>
    </lineage>
</organism>
<protein>
    <recommendedName>
        <fullName>Putative uncharacterized protein SNHG12</fullName>
    </recommendedName>
    <alternativeName>
        <fullName>Transformation-related gene 11 protein</fullName>
        <shortName>TRG-11</shortName>
    </alternativeName>
</protein>
<name>SNH12_HUMAN</name>
<sequence>MQGTWLPPSFLAVCDTEEVSLFLELCFKIHVTCKAVLICDYGPMELGQSLWEAEGKDPGHFR</sequence>
<reference key="1">
    <citation type="submission" date="2003-04" db="EMBL/GenBank/DDBJ databases">
        <title>Identification of a human transforming gene.</title>
        <authorList>
            <person name="Kim J.W."/>
        </authorList>
    </citation>
    <scope>NUCLEOTIDE SEQUENCE [LARGE SCALE MRNA]</scope>
</reference>
<reference key="2">
    <citation type="submission" date="2000-06" db="EMBL/GenBank/DDBJ databases">
        <title>Human acute promyelocytic leukemia cell line NB4's apoptosis/differentiation related genes.</title>
        <authorList>
            <person name="Yu W.-Q."/>
            <person name="Sun B.-Z."/>
            <person name="Chai Y.-B."/>
            <person name="Zhu F."/>
            <person name="Liu X.-S."/>
            <person name="Li Z."/>
            <person name="Lu F."/>
            <person name="Yan W."/>
            <person name="Yang H."/>
            <person name="Zhao Z.-L."/>
        </authorList>
    </citation>
    <scope>NUCLEOTIDE SEQUENCE [LARGE SCALE MRNA]</scope>
    <source>
        <tissue>Promyelocytic leukemia</tissue>
    </source>
</reference>
<reference key="3">
    <citation type="journal article" date="2006" name="Nature">
        <title>The DNA sequence and biological annotation of human chromosome 1.</title>
        <authorList>
            <person name="Gregory S.G."/>
            <person name="Barlow K.F."/>
            <person name="McLay K.E."/>
            <person name="Kaul R."/>
            <person name="Swarbreck D."/>
            <person name="Dunham A."/>
            <person name="Scott C.E."/>
            <person name="Howe K.L."/>
            <person name="Woodfine K."/>
            <person name="Spencer C.C.A."/>
            <person name="Jones M.C."/>
            <person name="Gillson C."/>
            <person name="Searle S."/>
            <person name="Zhou Y."/>
            <person name="Kokocinski F."/>
            <person name="McDonald L."/>
            <person name="Evans R."/>
            <person name="Phillips K."/>
            <person name="Atkinson A."/>
            <person name="Cooper R."/>
            <person name="Jones C."/>
            <person name="Hall R.E."/>
            <person name="Andrews T.D."/>
            <person name="Lloyd C."/>
            <person name="Ainscough R."/>
            <person name="Almeida J.P."/>
            <person name="Ambrose K.D."/>
            <person name="Anderson F."/>
            <person name="Andrew R.W."/>
            <person name="Ashwell R.I.S."/>
            <person name="Aubin K."/>
            <person name="Babbage A.K."/>
            <person name="Bagguley C.L."/>
            <person name="Bailey J."/>
            <person name="Beasley H."/>
            <person name="Bethel G."/>
            <person name="Bird C.P."/>
            <person name="Bray-Allen S."/>
            <person name="Brown J.Y."/>
            <person name="Brown A.J."/>
            <person name="Buckley D."/>
            <person name="Burton J."/>
            <person name="Bye J."/>
            <person name="Carder C."/>
            <person name="Chapman J.C."/>
            <person name="Clark S.Y."/>
            <person name="Clarke G."/>
            <person name="Clee C."/>
            <person name="Cobley V."/>
            <person name="Collier R.E."/>
            <person name="Corby N."/>
            <person name="Coville G.J."/>
            <person name="Davies J."/>
            <person name="Deadman R."/>
            <person name="Dunn M."/>
            <person name="Earthrowl M."/>
            <person name="Ellington A.G."/>
            <person name="Errington H."/>
            <person name="Frankish A."/>
            <person name="Frankland J."/>
            <person name="French L."/>
            <person name="Garner P."/>
            <person name="Garnett J."/>
            <person name="Gay L."/>
            <person name="Ghori M.R.J."/>
            <person name="Gibson R."/>
            <person name="Gilby L.M."/>
            <person name="Gillett W."/>
            <person name="Glithero R.J."/>
            <person name="Grafham D.V."/>
            <person name="Griffiths C."/>
            <person name="Griffiths-Jones S."/>
            <person name="Grocock R."/>
            <person name="Hammond S."/>
            <person name="Harrison E.S.I."/>
            <person name="Hart E."/>
            <person name="Haugen E."/>
            <person name="Heath P.D."/>
            <person name="Holmes S."/>
            <person name="Holt K."/>
            <person name="Howden P.J."/>
            <person name="Hunt A.R."/>
            <person name="Hunt S.E."/>
            <person name="Hunter G."/>
            <person name="Isherwood J."/>
            <person name="James R."/>
            <person name="Johnson C."/>
            <person name="Johnson D."/>
            <person name="Joy A."/>
            <person name="Kay M."/>
            <person name="Kershaw J.K."/>
            <person name="Kibukawa M."/>
            <person name="Kimberley A.M."/>
            <person name="King A."/>
            <person name="Knights A.J."/>
            <person name="Lad H."/>
            <person name="Laird G."/>
            <person name="Lawlor S."/>
            <person name="Leongamornlert D.A."/>
            <person name="Lloyd D.M."/>
            <person name="Loveland J."/>
            <person name="Lovell J."/>
            <person name="Lush M.J."/>
            <person name="Lyne R."/>
            <person name="Martin S."/>
            <person name="Mashreghi-Mohammadi M."/>
            <person name="Matthews L."/>
            <person name="Matthews N.S.W."/>
            <person name="McLaren S."/>
            <person name="Milne S."/>
            <person name="Mistry S."/>
            <person name="Moore M.J.F."/>
            <person name="Nickerson T."/>
            <person name="O'Dell C.N."/>
            <person name="Oliver K."/>
            <person name="Palmeiri A."/>
            <person name="Palmer S.A."/>
            <person name="Parker A."/>
            <person name="Patel D."/>
            <person name="Pearce A.V."/>
            <person name="Peck A.I."/>
            <person name="Pelan S."/>
            <person name="Phelps K."/>
            <person name="Phillimore B.J."/>
            <person name="Plumb R."/>
            <person name="Rajan J."/>
            <person name="Raymond C."/>
            <person name="Rouse G."/>
            <person name="Saenphimmachak C."/>
            <person name="Sehra H.K."/>
            <person name="Sheridan E."/>
            <person name="Shownkeen R."/>
            <person name="Sims S."/>
            <person name="Skuce C.D."/>
            <person name="Smith M."/>
            <person name="Steward C."/>
            <person name="Subramanian S."/>
            <person name="Sycamore N."/>
            <person name="Tracey A."/>
            <person name="Tromans A."/>
            <person name="Van Helmond Z."/>
            <person name="Wall M."/>
            <person name="Wallis J.M."/>
            <person name="White S."/>
            <person name="Whitehead S.L."/>
            <person name="Wilkinson J.E."/>
            <person name="Willey D.L."/>
            <person name="Williams H."/>
            <person name="Wilming L."/>
            <person name="Wray P.W."/>
            <person name="Wu Z."/>
            <person name="Coulson A."/>
            <person name="Vaudin M."/>
            <person name="Sulston J.E."/>
            <person name="Durbin R.M."/>
            <person name="Hubbard T."/>
            <person name="Wooster R."/>
            <person name="Dunham I."/>
            <person name="Carter N.P."/>
            <person name="McVean G."/>
            <person name="Ross M.T."/>
            <person name="Harrow J."/>
            <person name="Olson M.V."/>
            <person name="Beck S."/>
            <person name="Rogers J."/>
            <person name="Bentley D.R."/>
        </authorList>
    </citation>
    <scope>NUCLEOTIDE SEQUENCE [LARGE SCALE GENOMIC DNA]</scope>
</reference>
<feature type="chain" id="PRO_0000278632" description="Putative uncharacterized protein SNHG12">
    <location>
        <begin position="1"/>
        <end position="62"/>
    </location>
</feature>
<gene>
    <name type="primary">SNHG12</name>
    <name type="synonym">C1orf79</name>
    <name type="ORF">PNAS-123</name>
    <name type="ORF">TRG11</name>
</gene>
<keyword id="KW-1185">Reference proteome</keyword>
<proteinExistence type="uncertain"/>